<accession>Q9A280</accession>
<proteinExistence type="inferred from homology"/>
<organism>
    <name type="scientific">Caulobacter vibrioides (strain ATCC 19089 / CIP 103742 / CB 15)</name>
    <name type="common">Caulobacter crescentus</name>
    <dbReference type="NCBI Taxonomy" id="190650"/>
    <lineage>
        <taxon>Bacteria</taxon>
        <taxon>Pseudomonadati</taxon>
        <taxon>Pseudomonadota</taxon>
        <taxon>Alphaproteobacteria</taxon>
        <taxon>Caulobacterales</taxon>
        <taxon>Caulobacteraceae</taxon>
        <taxon>Caulobacter</taxon>
    </lineage>
</organism>
<reference key="1">
    <citation type="journal article" date="2001" name="Proc. Natl. Acad. Sci. U.S.A.">
        <title>Complete genome sequence of Caulobacter crescentus.</title>
        <authorList>
            <person name="Nierman W.C."/>
            <person name="Feldblyum T.V."/>
            <person name="Laub M.T."/>
            <person name="Paulsen I.T."/>
            <person name="Nelson K.E."/>
            <person name="Eisen J.A."/>
            <person name="Heidelberg J.F."/>
            <person name="Alley M.R.K."/>
            <person name="Ohta N."/>
            <person name="Maddock J.R."/>
            <person name="Potocka I."/>
            <person name="Nelson W.C."/>
            <person name="Newton A."/>
            <person name="Stephens C."/>
            <person name="Phadke N.D."/>
            <person name="Ely B."/>
            <person name="DeBoy R.T."/>
            <person name="Dodson R.J."/>
            <person name="Durkin A.S."/>
            <person name="Gwinn M.L."/>
            <person name="Haft D.H."/>
            <person name="Kolonay J.F."/>
            <person name="Smit J."/>
            <person name="Craven M.B."/>
            <person name="Khouri H.M."/>
            <person name="Shetty J."/>
            <person name="Berry K.J."/>
            <person name="Utterback T.R."/>
            <person name="Tran K."/>
            <person name="Wolf A.M."/>
            <person name="Vamathevan J.J."/>
            <person name="Ermolaeva M.D."/>
            <person name="White O."/>
            <person name="Salzberg S.L."/>
            <person name="Venter J.C."/>
            <person name="Shapiro L."/>
            <person name="Fraser C.M."/>
        </authorList>
    </citation>
    <scope>NUCLEOTIDE SEQUENCE [LARGE SCALE GENOMIC DNA]</scope>
    <source>
        <strain>ATCC 19089 / CIP 103742 / CB 15</strain>
    </source>
</reference>
<name>DAPF_CAUVC</name>
<dbReference type="EC" id="5.1.1.7" evidence="1"/>
<dbReference type="EMBL" id="AE005673">
    <property type="protein sequence ID" value="AAK25648.1"/>
    <property type="molecule type" value="Genomic_DNA"/>
</dbReference>
<dbReference type="PIR" id="D87706">
    <property type="entry name" value="D87706"/>
</dbReference>
<dbReference type="RefSeq" id="NP_422480.1">
    <property type="nucleotide sequence ID" value="NC_002696.2"/>
</dbReference>
<dbReference type="RefSeq" id="WP_010921513.1">
    <property type="nucleotide sequence ID" value="NC_002696.2"/>
</dbReference>
<dbReference type="SMR" id="Q9A280"/>
<dbReference type="STRING" id="190650.CC_3686"/>
<dbReference type="EnsemblBacteria" id="AAK25648">
    <property type="protein sequence ID" value="AAK25648"/>
    <property type="gene ID" value="CC_3686"/>
</dbReference>
<dbReference type="KEGG" id="ccr:CC_3686"/>
<dbReference type="PATRIC" id="fig|190650.5.peg.3686"/>
<dbReference type="eggNOG" id="COG0253">
    <property type="taxonomic scope" value="Bacteria"/>
</dbReference>
<dbReference type="HOGENOM" id="CLU_053306_1_0_5"/>
<dbReference type="BioCyc" id="CAULO:CC3686-MONOMER"/>
<dbReference type="UniPathway" id="UPA00034">
    <property type="reaction ID" value="UER00025"/>
</dbReference>
<dbReference type="Proteomes" id="UP000001816">
    <property type="component" value="Chromosome"/>
</dbReference>
<dbReference type="GO" id="GO:0005829">
    <property type="term" value="C:cytosol"/>
    <property type="evidence" value="ECO:0007669"/>
    <property type="project" value="TreeGrafter"/>
</dbReference>
<dbReference type="GO" id="GO:0008837">
    <property type="term" value="F:diaminopimelate epimerase activity"/>
    <property type="evidence" value="ECO:0007669"/>
    <property type="project" value="UniProtKB-UniRule"/>
</dbReference>
<dbReference type="GO" id="GO:0009089">
    <property type="term" value="P:lysine biosynthetic process via diaminopimelate"/>
    <property type="evidence" value="ECO:0007669"/>
    <property type="project" value="UniProtKB-UniRule"/>
</dbReference>
<dbReference type="Gene3D" id="3.10.310.10">
    <property type="entry name" value="Diaminopimelate Epimerase, Chain A, domain 1"/>
    <property type="match status" value="2"/>
</dbReference>
<dbReference type="HAMAP" id="MF_00197">
    <property type="entry name" value="DAP_epimerase"/>
    <property type="match status" value="1"/>
</dbReference>
<dbReference type="InterPro" id="IPR018510">
    <property type="entry name" value="DAP_epimerase_AS"/>
</dbReference>
<dbReference type="InterPro" id="IPR001653">
    <property type="entry name" value="DAP_epimerase_DapF"/>
</dbReference>
<dbReference type="NCBIfam" id="TIGR00652">
    <property type="entry name" value="DapF"/>
    <property type="match status" value="1"/>
</dbReference>
<dbReference type="PANTHER" id="PTHR31689:SF0">
    <property type="entry name" value="DIAMINOPIMELATE EPIMERASE"/>
    <property type="match status" value="1"/>
</dbReference>
<dbReference type="PANTHER" id="PTHR31689">
    <property type="entry name" value="DIAMINOPIMELATE EPIMERASE, CHLOROPLASTIC"/>
    <property type="match status" value="1"/>
</dbReference>
<dbReference type="Pfam" id="PF01678">
    <property type="entry name" value="DAP_epimerase"/>
    <property type="match status" value="2"/>
</dbReference>
<dbReference type="SUPFAM" id="SSF54506">
    <property type="entry name" value="Diaminopimelate epimerase-like"/>
    <property type="match status" value="2"/>
</dbReference>
<dbReference type="PROSITE" id="PS01326">
    <property type="entry name" value="DAP_EPIMERASE"/>
    <property type="match status" value="1"/>
</dbReference>
<protein>
    <recommendedName>
        <fullName evidence="1">Diaminopimelate epimerase</fullName>
        <shortName evidence="1">DAP epimerase</shortName>
        <ecNumber evidence="1">5.1.1.7</ecNumber>
    </recommendedName>
    <alternativeName>
        <fullName evidence="1">PLP-independent amino acid racemase</fullName>
    </alternativeName>
</protein>
<evidence type="ECO:0000255" key="1">
    <source>
        <dbReference type="HAMAP-Rule" id="MF_00197"/>
    </source>
</evidence>
<sequence>MSRTFLKMNGLGNDFVVIQTLTEAFDPTPEQIRAIAKRPGVDGKGGIGCDQVIAIDPPRAEGASAYVRFWNSDGEVAGACGNGTRCVAWLLMQSAGKDAVAFDTVAGRLSGVAAGDKLVTVDMGPPGLDWTQIPLAEEMNTERVELQVGPIDAPLVHTPVCVSMGNPHVVFFVDAPVTDDFARGTGSLVEHHPLFPEGVNVGFAHIASRDHIRLKVWERGAGLTQACGTGACAAQVAAVRRGLTDRKARVEFDTGSLTIEWRESDGHVIMTGPITMEYAGKLPELVAA</sequence>
<gene>
    <name evidence="1" type="primary">dapF</name>
    <name type="ordered locus">CC_3686</name>
</gene>
<comment type="function">
    <text evidence="1">Catalyzes the stereoinversion of LL-2,6-diaminopimelate (L,L-DAP) to meso-diaminopimelate (meso-DAP), a precursor of L-lysine and an essential component of the bacterial peptidoglycan.</text>
</comment>
<comment type="catalytic activity">
    <reaction evidence="1">
        <text>(2S,6S)-2,6-diaminopimelate = meso-2,6-diaminopimelate</text>
        <dbReference type="Rhea" id="RHEA:15393"/>
        <dbReference type="ChEBI" id="CHEBI:57609"/>
        <dbReference type="ChEBI" id="CHEBI:57791"/>
        <dbReference type="EC" id="5.1.1.7"/>
    </reaction>
</comment>
<comment type="pathway">
    <text evidence="1">Amino-acid biosynthesis; L-lysine biosynthesis via DAP pathway; DL-2,6-diaminopimelate from LL-2,6-diaminopimelate: step 1/1.</text>
</comment>
<comment type="subunit">
    <text evidence="1">Homodimer.</text>
</comment>
<comment type="subcellular location">
    <subcellularLocation>
        <location evidence="1">Cytoplasm</location>
    </subcellularLocation>
</comment>
<comment type="similarity">
    <text evidence="1">Belongs to the diaminopimelate epimerase family.</text>
</comment>
<keyword id="KW-0028">Amino-acid biosynthesis</keyword>
<keyword id="KW-0963">Cytoplasm</keyword>
<keyword id="KW-0413">Isomerase</keyword>
<keyword id="KW-0457">Lysine biosynthesis</keyword>
<keyword id="KW-1185">Reference proteome</keyword>
<feature type="chain" id="PRO_0000149829" description="Diaminopimelate epimerase">
    <location>
        <begin position="1"/>
        <end position="288"/>
    </location>
</feature>
<feature type="active site" description="Proton donor" evidence="1">
    <location>
        <position position="80"/>
    </location>
</feature>
<feature type="active site" description="Proton acceptor" evidence="1">
    <location>
        <position position="227"/>
    </location>
</feature>
<feature type="binding site" evidence="1">
    <location>
        <position position="13"/>
    </location>
    <ligand>
        <name>substrate</name>
    </ligand>
</feature>
<feature type="binding site" evidence="1">
    <location>
        <position position="51"/>
    </location>
    <ligand>
        <name>substrate</name>
    </ligand>
</feature>
<feature type="binding site" evidence="1">
    <location>
        <position position="71"/>
    </location>
    <ligand>
        <name>substrate</name>
    </ligand>
</feature>
<feature type="binding site" evidence="1">
    <location>
        <begin position="81"/>
        <end position="82"/>
    </location>
    <ligand>
        <name>substrate</name>
    </ligand>
</feature>
<feature type="binding site" evidence="1">
    <location>
        <position position="166"/>
    </location>
    <ligand>
        <name>substrate</name>
    </ligand>
</feature>
<feature type="binding site" evidence="1">
    <location>
        <position position="200"/>
    </location>
    <ligand>
        <name>substrate</name>
    </ligand>
</feature>
<feature type="binding site" evidence="1">
    <location>
        <begin position="218"/>
        <end position="219"/>
    </location>
    <ligand>
        <name>substrate</name>
    </ligand>
</feature>
<feature type="binding site" evidence="1">
    <location>
        <begin position="228"/>
        <end position="229"/>
    </location>
    <ligand>
        <name>substrate</name>
    </ligand>
</feature>
<feature type="site" description="Could be important to modulate the pK values of the two catalytic cysteine residues" evidence="1">
    <location>
        <position position="168"/>
    </location>
</feature>
<feature type="site" description="Could be important to modulate the pK values of the two catalytic cysteine residues" evidence="1">
    <location>
        <position position="218"/>
    </location>
</feature>